<evidence type="ECO:0000250" key="1"/>
<evidence type="ECO:0000255" key="2">
    <source>
        <dbReference type="PROSITE-ProRule" id="PRU00465"/>
    </source>
</evidence>
<evidence type="ECO:0000305" key="3"/>
<sequence length="99" mass="10863">MTSYKVKLTNEKEGIDVEINCPNDQYILDAAEEQGIDLPYSCRAGACSTCAGKLISGTVDQSDQSFLDDEQIKEGFVLTCVAYPTSNCTILTHQEEALY</sequence>
<geneLocation type="chloroplast"/>
<feature type="initiator methionine" description="Removed" evidence="1">
    <location>
        <position position="1"/>
    </location>
</feature>
<feature type="chain" id="PRO_0000189316" description="Ferredoxin">
    <location>
        <begin position="2"/>
        <end position="99"/>
    </location>
</feature>
<feature type="domain" description="2Fe-2S ferredoxin-type" evidence="2">
    <location>
        <begin position="4"/>
        <end position="96"/>
    </location>
</feature>
<feature type="binding site" evidence="2">
    <location>
        <position position="42"/>
    </location>
    <ligand>
        <name>[2Fe-2S] cluster</name>
        <dbReference type="ChEBI" id="CHEBI:190135"/>
    </ligand>
</feature>
<feature type="binding site" evidence="2">
    <location>
        <position position="47"/>
    </location>
    <ligand>
        <name>[2Fe-2S] cluster</name>
        <dbReference type="ChEBI" id="CHEBI:190135"/>
    </ligand>
</feature>
<feature type="binding site" evidence="2">
    <location>
        <position position="50"/>
    </location>
    <ligand>
        <name>[2Fe-2S] cluster</name>
        <dbReference type="ChEBI" id="CHEBI:190135"/>
    </ligand>
</feature>
<feature type="binding site" evidence="2">
    <location>
        <position position="80"/>
    </location>
    <ligand>
        <name>[2Fe-2S] cluster</name>
        <dbReference type="ChEBI" id="CHEBI:190135"/>
    </ligand>
</feature>
<organism>
    <name type="scientific">Cyanidium caldarium</name>
    <name type="common">Red alga</name>
    <dbReference type="NCBI Taxonomy" id="2771"/>
    <lineage>
        <taxon>Eukaryota</taxon>
        <taxon>Rhodophyta</taxon>
        <taxon>Bangiophyceae</taxon>
        <taxon>Cyanidiales</taxon>
        <taxon>Cyanidiaceae</taxon>
        <taxon>Cyanidium</taxon>
    </lineage>
</organism>
<protein>
    <recommendedName>
        <fullName>Ferredoxin</fullName>
    </recommendedName>
</protein>
<gene>
    <name type="primary">petF</name>
</gene>
<comment type="function">
    <text>Ferredoxins are iron-sulfur proteins that transfer electrons in a wide variety of metabolic reactions.</text>
</comment>
<comment type="cofactor">
    <cofactor>
        <name>[2Fe-2S] cluster</name>
        <dbReference type="ChEBI" id="CHEBI:190135"/>
    </cofactor>
    <text>Binds 1 [2Fe-2S] cluster.</text>
</comment>
<comment type="subunit">
    <text evidence="1">Forms a complex with heterodimeric ferredoxin-thioredoxin reductase (FTR) and thioredoxin.</text>
</comment>
<comment type="subcellular location">
    <subcellularLocation>
        <location>Plastid</location>
        <location>Chloroplast</location>
    </subcellularLocation>
</comment>
<comment type="similarity">
    <text evidence="3">Belongs to the 2Fe2S plant-type ferredoxin family.</text>
</comment>
<reference key="1">
    <citation type="journal article" date="2000" name="J. Mol. Evol.">
        <title>The structure and gene repertoire of an ancient red algal plastid genome.</title>
        <authorList>
            <person name="Gloeckner G."/>
            <person name="Rosenthal A."/>
            <person name="Valentin K.-U."/>
        </authorList>
    </citation>
    <scope>NUCLEOTIDE SEQUENCE [LARGE SCALE GENOMIC DNA]</scope>
    <source>
        <strain>RK-1</strain>
    </source>
</reference>
<proteinExistence type="inferred from homology"/>
<name>FER1_CYACA</name>
<accession>Q9TLW0</accession>
<keyword id="KW-0001">2Fe-2S</keyword>
<keyword id="KW-0150">Chloroplast</keyword>
<keyword id="KW-0249">Electron transport</keyword>
<keyword id="KW-0408">Iron</keyword>
<keyword id="KW-0411">Iron-sulfur</keyword>
<keyword id="KW-0479">Metal-binding</keyword>
<keyword id="KW-0934">Plastid</keyword>
<keyword id="KW-0813">Transport</keyword>
<dbReference type="EMBL" id="AF022186">
    <property type="protein sequence ID" value="AAF12936.1"/>
    <property type="molecule type" value="Genomic_DNA"/>
</dbReference>
<dbReference type="RefSeq" id="NP_045158.1">
    <property type="nucleotide sequence ID" value="NC_001840.1"/>
</dbReference>
<dbReference type="SMR" id="Q9TLW0"/>
<dbReference type="GeneID" id="800140"/>
<dbReference type="GO" id="GO:0009507">
    <property type="term" value="C:chloroplast"/>
    <property type="evidence" value="ECO:0007669"/>
    <property type="project" value="UniProtKB-SubCell"/>
</dbReference>
<dbReference type="GO" id="GO:0051537">
    <property type="term" value="F:2 iron, 2 sulfur cluster binding"/>
    <property type="evidence" value="ECO:0007669"/>
    <property type="project" value="UniProtKB-KW"/>
</dbReference>
<dbReference type="GO" id="GO:0009055">
    <property type="term" value="F:electron transfer activity"/>
    <property type="evidence" value="ECO:0007669"/>
    <property type="project" value="InterPro"/>
</dbReference>
<dbReference type="GO" id="GO:0046872">
    <property type="term" value="F:metal ion binding"/>
    <property type="evidence" value="ECO:0007669"/>
    <property type="project" value="UniProtKB-KW"/>
</dbReference>
<dbReference type="GO" id="GO:0022900">
    <property type="term" value="P:electron transport chain"/>
    <property type="evidence" value="ECO:0007669"/>
    <property type="project" value="InterPro"/>
</dbReference>
<dbReference type="CDD" id="cd00207">
    <property type="entry name" value="fer2"/>
    <property type="match status" value="1"/>
</dbReference>
<dbReference type="FunFam" id="3.10.20.30:FF:000014">
    <property type="entry name" value="Ferredoxin"/>
    <property type="match status" value="1"/>
</dbReference>
<dbReference type="Gene3D" id="3.10.20.30">
    <property type="match status" value="1"/>
</dbReference>
<dbReference type="InterPro" id="IPR036010">
    <property type="entry name" value="2Fe-2S_ferredoxin-like_sf"/>
</dbReference>
<dbReference type="InterPro" id="IPR001041">
    <property type="entry name" value="2Fe-2S_ferredoxin-type"/>
</dbReference>
<dbReference type="InterPro" id="IPR006058">
    <property type="entry name" value="2Fe2S_fd_BS"/>
</dbReference>
<dbReference type="InterPro" id="IPR012675">
    <property type="entry name" value="Beta-grasp_dom_sf"/>
</dbReference>
<dbReference type="InterPro" id="IPR010241">
    <property type="entry name" value="Fd_pln"/>
</dbReference>
<dbReference type="NCBIfam" id="TIGR02008">
    <property type="entry name" value="fdx_plant"/>
    <property type="match status" value="1"/>
</dbReference>
<dbReference type="PANTHER" id="PTHR43112">
    <property type="entry name" value="FERREDOXIN"/>
    <property type="match status" value="1"/>
</dbReference>
<dbReference type="PANTHER" id="PTHR43112:SF3">
    <property type="entry name" value="FERREDOXIN-2, CHLOROPLASTIC"/>
    <property type="match status" value="1"/>
</dbReference>
<dbReference type="Pfam" id="PF00111">
    <property type="entry name" value="Fer2"/>
    <property type="match status" value="1"/>
</dbReference>
<dbReference type="SUPFAM" id="SSF54292">
    <property type="entry name" value="2Fe-2S ferredoxin-like"/>
    <property type="match status" value="1"/>
</dbReference>
<dbReference type="PROSITE" id="PS00197">
    <property type="entry name" value="2FE2S_FER_1"/>
    <property type="match status" value="1"/>
</dbReference>
<dbReference type="PROSITE" id="PS51085">
    <property type="entry name" value="2FE2S_FER_2"/>
    <property type="match status" value="1"/>
</dbReference>